<reference key="1">
    <citation type="journal article" date="2000" name="Nature">
        <title>The complete sequence of the mucosal pathogen Ureaplasma urealyticum.</title>
        <authorList>
            <person name="Glass J.I."/>
            <person name="Lefkowitz E.J."/>
            <person name="Glass J.S."/>
            <person name="Heiner C.R."/>
            <person name="Chen E.Y."/>
            <person name="Cassell G.H."/>
        </authorList>
    </citation>
    <scope>NUCLEOTIDE SEQUENCE [LARGE SCALE GENOMIC DNA]</scope>
    <source>
        <strain>ATCC 700970</strain>
    </source>
</reference>
<keyword id="KW-0067">ATP-binding</keyword>
<keyword id="KW-0436">Ligase</keyword>
<keyword id="KW-0547">Nucleotide-binding</keyword>
<keyword id="KW-0554">One-carbon metabolism</keyword>
<keyword id="KW-1185">Reference proteome</keyword>
<gene>
    <name evidence="1" type="primary">fhs</name>
    <name type="synonym">fthS</name>
    <name type="ordered locus">UU221</name>
</gene>
<organism>
    <name type="scientific">Ureaplasma parvum serovar 3 (strain ATCC 700970)</name>
    <dbReference type="NCBI Taxonomy" id="273119"/>
    <lineage>
        <taxon>Bacteria</taxon>
        <taxon>Bacillati</taxon>
        <taxon>Mycoplasmatota</taxon>
        <taxon>Mycoplasmoidales</taxon>
        <taxon>Mycoplasmoidaceae</taxon>
        <taxon>Ureaplasma</taxon>
    </lineage>
</organism>
<evidence type="ECO:0000255" key="1">
    <source>
        <dbReference type="HAMAP-Rule" id="MF_01543"/>
    </source>
</evidence>
<protein>
    <recommendedName>
        <fullName evidence="1">Formate--tetrahydrofolate ligase</fullName>
        <ecNumber evidence="1">6.3.4.3</ecNumber>
    </recommendedName>
    <alternativeName>
        <fullName evidence="1">Formyltetrahydrofolate synthetase</fullName>
        <shortName evidence="1">FHS</shortName>
        <shortName evidence="1">FTHFS</shortName>
    </alternativeName>
</protein>
<feature type="chain" id="PRO_0000199406" description="Formate--tetrahydrofolate ligase">
    <location>
        <begin position="1"/>
        <end position="521"/>
    </location>
</feature>
<name>FTHS_UREPA</name>
<dbReference type="EC" id="6.3.4.3" evidence="1"/>
<dbReference type="EMBL" id="AF222894">
    <property type="protein sequence ID" value="AAF30629.1"/>
    <property type="molecule type" value="Genomic_DNA"/>
</dbReference>
<dbReference type="RefSeq" id="WP_006688872.1">
    <property type="nucleotide sequence ID" value="NC_002162.1"/>
</dbReference>
<dbReference type="SMR" id="Q9PQS1"/>
<dbReference type="STRING" id="273119.UU221"/>
<dbReference type="EnsemblBacteria" id="AAF30629">
    <property type="protein sequence ID" value="AAF30629"/>
    <property type="gene ID" value="UU221"/>
</dbReference>
<dbReference type="GeneID" id="29672511"/>
<dbReference type="KEGG" id="uur:UU221"/>
<dbReference type="eggNOG" id="COG2759">
    <property type="taxonomic scope" value="Bacteria"/>
</dbReference>
<dbReference type="HOGENOM" id="CLU_003601_3_3_14"/>
<dbReference type="OrthoDB" id="9761733at2"/>
<dbReference type="UniPathway" id="UPA00193"/>
<dbReference type="Proteomes" id="UP000000423">
    <property type="component" value="Chromosome"/>
</dbReference>
<dbReference type="GO" id="GO:0005524">
    <property type="term" value="F:ATP binding"/>
    <property type="evidence" value="ECO:0007669"/>
    <property type="project" value="UniProtKB-UniRule"/>
</dbReference>
<dbReference type="GO" id="GO:0004329">
    <property type="term" value="F:formate-tetrahydrofolate ligase activity"/>
    <property type="evidence" value="ECO:0007669"/>
    <property type="project" value="UniProtKB-UniRule"/>
</dbReference>
<dbReference type="GO" id="GO:0035999">
    <property type="term" value="P:tetrahydrofolate interconversion"/>
    <property type="evidence" value="ECO:0007669"/>
    <property type="project" value="UniProtKB-UniRule"/>
</dbReference>
<dbReference type="Gene3D" id="3.30.1510.10">
    <property type="entry name" value="Domain 2, N(10)-formyltetrahydrofolate synthetase"/>
    <property type="match status" value="1"/>
</dbReference>
<dbReference type="Gene3D" id="3.10.410.10">
    <property type="entry name" value="Formyltetrahydrofolate synthetase, domain 3"/>
    <property type="match status" value="1"/>
</dbReference>
<dbReference type="Gene3D" id="3.40.50.300">
    <property type="entry name" value="P-loop containing nucleotide triphosphate hydrolases"/>
    <property type="match status" value="1"/>
</dbReference>
<dbReference type="HAMAP" id="MF_01543">
    <property type="entry name" value="FTHFS"/>
    <property type="match status" value="1"/>
</dbReference>
<dbReference type="InterPro" id="IPR000559">
    <property type="entry name" value="Formate_THF_ligase"/>
</dbReference>
<dbReference type="InterPro" id="IPR020628">
    <property type="entry name" value="Formate_THF_ligase_CS"/>
</dbReference>
<dbReference type="InterPro" id="IPR027417">
    <property type="entry name" value="P-loop_NTPase"/>
</dbReference>
<dbReference type="Pfam" id="PF01268">
    <property type="entry name" value="FTHFS"/>
    <property type="match status" value="1"/>
</dbReference>
<dbReference type="SUPFAM" id="SSF52540">
    <property type="entry name" value="P-loop containing nucleoside triphosphate hydrolases"/>
    <property type="match status" value="1"/>
</dbReference>
<dbReference type="PROSITE" id="PS00721">
    <property type="entry name" value="FTHFS_1"/>
    <property type="match status" value="1"/>
</dbReference>
<proteinExistence type="inferred from homology"/>
<comment type="catalytic activity">
    <reaction evidence="1">
        <text>(6S)-5,6,7,8-tetrahydrofolate + formate + ATP = (6R)-10-formyltetrahydrofolate + ADP + phosphate</text>
        <dbReference type="Rhea" id="RHEA:20221"/>
        <dbReference type="ChEBI" id="CHEBI:15740"/>
        <dbReference type="ChEBI" id="CHEBI:30616"/>
        <dbReference type="ChEBI" id="CHEBI:43474"/>
        <dbReference type="ChEBI" id="CHEBI:57453"/>
        <dbReference type="ChEBI" id="CHEBI:195366"/>
        <dbReference type="ChEBI" id="CHEBI:456216"/>
        <dbReference type="EC" id="6.3.4.3"/>
    </reaction>
</comment>
<comment type="pathway">
    <text evidence="1">One-carbon metabolism; tetrahydrofolate interconversion.</text>
</comment>
<comment type="similarity">
    <text evidence="1">Belongs to the formate--tetrahydrofolate ligase family.</text>
</comment>
<sequence length="521" mass="58466">MAKIIEEMINKKGLLIDDYELYGNEIAKIKSIKKLNKKDSKLIVITSMNPNPAGEGKTTTAIGLVDALNKHGYKAIGALREPSMGPVFGMKGTGSGGGLSFLKPFDKINLHFSGDFHAITAANNLIVAVIENEIHNRSSMQIDSQKILIKRCLDVNDRSLRNIEYDINHQQTKSGFNITAASDLMALFCLAHDHKDFEDKLAQTIVAYNIVNQPIRICDLELTKAIMAILEDALYANLVRTNEDNPVFVHGGPFANIAHGCNSIIATKNALALGDYVVTECGFGSDLGLEKFMNIKMASLNLKPDLIGLVISLKSIAYHAQTNEKDYVKQGFANVLCHINHIKKYNVSFIVYINVNTNTDSEEDLLTLEKLLDEHQIEHARSYAYSYGSKKSEEITKKTITLTNQINDHELKLIYDIKDHLSYKLKKICENVYGADGYELSYEAKEQLNRYEHLDFYLCIAKTPYSISDDAKLLNNPKNFKIHIERFEINYAAKLIIAITTTIYRMPGLNKEPAAKNFVMK</sequence>
<accession>Q9PQS1</accession>